<accession>O82012</accession>
<dbReference type="EMBL" id="AJ225048">
    <property type="protein sequence ID" value="CAA12389.1"/>
    <property type="molecule type" value="mRNA"/>
</dbReference>
<dbReference type="SMR" id="O82012"/>
<dbReference type="GO" id="GO:0005737">
    <property type="term" value="C:cytoplasm"/>
    <property type="evidence" value="ECO:0007669"/>
    <property type="project" value="UniProtKB-SubCell"/>
</dbReference>
<dbReference type="CDD" id="cd06472">
    <property type="entry name" value="ACD_ScHsp26_like"/>
    <property type="match status" value="1"/>
</dbReference>
<dbReference type="FunFam" id="2.60.40.790:FF:000009">
    <property type="entry name" value="17.6 kDa class I heat shock protein-like"/>
    <property type="match status" value="1"/>
</dbReference>
<dbReference type="Gene3D" id="2.60.40.790">
    <property type="match status" value="1"/>
</dbReference>
<dbReference type="InterPro" id="IPR002068">
    <property type="entry name" value="A-crystallin/Hsp20_dom"/>
</dbReference>
<dbReference type="InterPro" id="IPR008978">
    <property type="entry name" value="HSP20-like_chaperone"/>
</dbReference>
<dbReference type="InterPro" id="IPR031107">
    <property type="entry name" value="Small_HSP"/>
</dbReference>
<dbReference type="PANTHER" id="PTHR11527">
    <property type="entry name" value="HEAT-SHOCK PROTEIN 20 FAMILY MEMBER"/>
    <property type="match status" value="1"/>
</dbReference>
<dbReference type="Pfam" id="PF00011">
    <property type="entry name" value="HSP20"/>
    <property type="match status" value="1"/>
</dbReference>
<dbReference type="SUPFAM" id="SSF49764">
    <property type="entry name" value="HSP20-like chaperones"/>
    <property type="match status" value="1"/>
</dbReference>
<dbReference type="PROSITE" id="PS01031">
    <property type="entry name" value="SHSP"/>
    <property type="match status" value="1"/>
</dbReference>
<proteinExistence type="evidence at transcript level"/>
<keyword id="KW-0963">Cytoplasm</keyword>
<keyword id="KW-0346">Stress response</keyword>
<name>HSP12_SOLPE</name>
<comment type="subunit">
    <text evidence="1">Forms oligomeric structures.</text>
</comment>
<comment type="subcellular location">
    <subcellularLocation>
        <location evidence="1">Cytoplasm</location>
    </subcellularLocation>
</comment>
<comment type="induction">
    <text evidence="3">By heat stress.</text>
</comment>
<comment type="similarity">
    <text evidence="2">Belongs to the small heat shock protein (HSP20) family.</text>
</comment>
<feature type="chain" id="PRO_0000252663" description="17.6 kDa class I heat shock protein">
    <location>
        <begin position="1"/>
        <end position="154"/>
    </location>
</feature>
<feature type="domain" description="sHSP" evidence="2">
    <location>
        <begin position="40"/>
        <end position="154"/>
    </location>
</feature>
<sequence>MSLIPRIFGDRRSTSVFDPFSIDVFDPFKELGFTVSNSGETSAFANTRIDWKETPEAHVFKADLPGLKKEEVKVEVEEDRVLQISGERNVEKEDKNDTWHRVERSSGKFMRRFRLPENAKMDQVKASMENGVLTVTVPKEEVNNPDVKSIEISG</sequence>
<reference key="1">
    <citation type="online journal article" date="1998" name="Plant Gene Register">
        <title>Cloning and characterization of two different cDNAs coding for cytoplasmic small heat stress proteins in Lycopersicon peruvianum.</title>
        <authorList>
            <person name="Forreiter C."/>
            <person name="Loew D."/>
        </authorList>
        <locator>PGR98-095</locator>
    </citation>
    <scope>NUCLEOTIDE SEQUENCE [MRNA]</scope>
    <scope>INDUCTION</scope>
</reference>
<organism>
    <name type="scientific">Solanum peruvianum</name>
    <name type="common">Peruvian tomato</name>
    <name type="synonym">Lycopersicon peruvianum</name>
    <dbReference type="NCBI Taxonomy" id="4082"/>
    <lineage>
        <taxon>Eukaryota</taxon>
        <taxon>Viridiplantae</taxon>
        <taxon>Streptophyta</taxon>
        <taxon>Embryophyta</taxon>
        <taxon>Tracheophyta</taxon>
        <taxon>Spermatophyta</taxon>
        <taxon>Magnoliopsida</taxon>
        <taxon>eudicotyledons</taxon>
        <taxon>Gunneridae</taxon>
        <taxon>Pentapetalae</taxon>
        <taxon>asterids</taxon>
        <taxon>lamiids</taxon>
        <taxon>Solanales</taxon>
        <taxon>Solanaceae</taxon>
        <taxon>Solanoideae</taxon>
        <taxon>Solaneae</taxon>
        <taxon>Solanum</taxon>
        <taxon>Solanum subgen. Lycopersicon</taxon>
    </lineage>
</organism>
<protein>
    <recommendedName>
        <fullName>17.6 kDa class I heat shock protein</fullName>
    </recommendedName>
    <alternativeName>
        <fullName>Hsp20.0</fullName>
    </alternativeName>
</protein>
<evidence type="ECO:0000250" key="1"/>
<evidence type="ECO:0000255" key="2">
    <source>
        <dbReference type="PROSITE-ProRule" id="PRU00285"/>
    </source>
</evidence>
<evidence type="ECO:0000269" key="3">
    <source ref="1"/>
</evidence>